<organism>
    <name type="scientific">Mycobacterium leprae (strain TN)</name>
    <dbReference type="NCBI Taxonomy" id="272631"/>
    <lineage>
        <taxon>Bacteria</taxon>
        <taxon>Bacillati</taxon>
        <taxon>Actinomycetota</taxon>
        <taxon>Actinomycetes</taxon>
        <taxon>Mycobacteriales</taxon>
        <taxon>Mycobacteriaceae</taxon>
        <taxon>Mycobacterium</taxon>
    </lineage>
</organism>
<reference key="1">
    <citation type="submission" date="1994-03" db="EMBL/GenBank/DDBJ databases">
        <authorList>
            <person name="Robison K."/>
            <person name="Smith D.R."/>
        </authorList>
    </citation>
    <scope>NUCLEOTIDE SEQUENCE [GENOMIC DNA]</scope>
</reference>
<reference key="2">
    <citation type="journal article" date="2001" name="Nature">
        <title>Massive gene decay in the leprosy bacillus.</title>
        <authorList>
            <person name="Cole S.T."/>
            <person name="Eiglmeier K."/>
            <person name="Parkhill J."/>
            <person name="James K.D."/>
            <person name="Thomson N.R."/>
            <person name="Wheeler P.R."/>
            <person name="Honore N."/>
            <person name="Garnier T."/>
            <person name="Churcher C.M."/>
            <person name="Harris D.E."/>
            <person name="Mungall K.L."/>
            <person name="Basham D."/>
            <person name="Brown D."/>
            <person name="Chillingworth T."/>
            <person name="Connor R."/>
            <person name="Davies R.M."/>
            <person name="Devlin K."/>
            <person name="Duthoy S."/>
            <person name="Feltwell T."/>
            <person name="Fraser A."/>
            <person name="Hamlin N."/>
            <person name="Holroyd S."/>
            <person name="Hornsby T."/>
            <person name="Jagels K."/>
            <person name="Lacroix C."/>
            <person name="Maclean J."/>
            <person name="Moule S."/>
            <person name="Murphy L.D."/>
            <person name="Oliver K."/>
            <person name="Quail M.A."/>
            <person name="Rajandream M.A."/>
            <person name="Rutherford K.M."/>
            <person name="Rutter S."/>
            <person name="Seeger K."/>
            <person name="Simon S."/>
            <person name="Simmonds M."/>
            <person name="Skelton J."/>
            <person name="Squares R."/>
            <person name="Squares S."/>
            <person name="Stevens K."/>
            <person name="Taylor K."/>
            <person name="Whitehead S."/>
            <person name="Woodward J.R."/>
            <person name="Barrell B.G."/>
        </authorList>
    </citation>
    <scope>NUCLEOTIDE SEQUENCE [LARGE SCALE GENOMIC DNA]</scope>
    <source>
        <strain>TN</strain>
    </source>
</reference>
<feature type="chain" id="PRO_0000103890" description="Biotin synthase auxiliary protein">
    <location>
        <begin position="1"/>
        <end position="80"/>
    </location>
</feature>
<comment type="function">
    <text evidence="1">Required for the activity of the biotin synthase BioB.</text>
</comment>
<comment type="cofactor">
    <cofactor evidence="1">
        <name>iron-sulfur cluster</name>
        <dbReference type="ChEBI" id="CHEBI:30408"/>
    </cofactor>
    <text evidence="1">Probably contains an unusual Fe-S cluster.</text>
</comment>
<comment type="similarity">
    <text evidence="2">Belongs to the BsaP family.</text>
</comment>
<accession>Q49616</accession>
<evidence type="ECO:0000250" key="1">
    <source>
        <dbReference type="UniProtKB" id="P9WLT7"/>
    </source>
</evidence>
<evidence type="ECO:0000305" key="2"/>
<keyword id="KW-0093">Biotin biosynthesis</keyword>
<keyword id="KW-0408">Iron</keyword>
<keyword id="KW-0411">Iron-sulfur</keyword>
<keyword id="KW-0479">Metal-binding</keyword>
<keyword id="KW-1185">Reference proteome</keyword>
<dbReference type="EMBL" id="U00010">
    <property type="protein sequence ID" value="AAA17058.1"/>
    <property type="molecule type" value="Genomic_DNA"/>
</dbReference>
<dbReference type="EMBL" id="AL583921">
    <property type="protein sequence ID" value="CAC31602.1"/>
    <property type="molecule type" value="Genomic_DNA"/>
</dbReference>
<dbReference type="PIR" id="S72694">
    <property type="entry name" value="S72694"/>
</dbReference>
<dbReference type="RefSeq" id="NP_301884.1">
    <property type="nucleotide sequence ID" value="NC_002677.1"/>
</dbReference>
<dbReference type="RefSeq" id="WP_010908205.1">
    <property type="nucleotide sequence ID" value="NC_002677.1"/>
</dbReference>
<dbReference type="STRING" id="272631.gene:17575052"/>
<dbReference type="KEGG" id="mle:ML1221"/>
<dbReference type="PATRIC" id="fig|272631.5.peg.2241"/>
<dbReference type="Leproma" id="ML1221"/>
<dbReference type="eggNOG" id="ENOG5033ASY">
    <property type="taxonomic scope" value="Bacteria"/>
</dbReference>
<dbReference type="HOGENOM" id="CLU_166664_0_0_11"/>
<dbReference type="OrthoDB" id="3829284at2"/>
<dbReference type="Proteomes" id="UP000000806">
    <property type="component" value="Chromosome"/>
</dbReference>
<dbReference type="GO" id="GO:0051536">
    <property type="term" value="F:iron-sulfur cluster binding"/>
    <property type="evidence" value="ECO:0007669"/>
    <property type="project" value="UniProtKB-KW"/>
</dbReference>
<dbReference type="GO" id="GO:0046872">
    <property type="term" value="F:metal ion binding"/>
    <property type="evidence" value="ECO:0007669"/>
    <property type="project" value="UniProtKB-KW"/>
</dbReference>
<dbReference type="GO" id="GO:0009102">
    <property type="term" value="P:biotin biosynthetic process"/>
    <property type="evidence" value="ECO:0007669"/>
    <property type="project" value="UniProtKB-KW"/>
</dbReference>
<sequence>MVQDLPTPIGAGIYNIYTGVKHRDELAGASMPTVAQLGLEPPRFCAECGRRMVVQVRPDGWRAKCSRHGQVDSVDMEAKR</sequence>
<proteinExistence type="inferred from homology"/>
<gene>
    <name evidence="1" type="primary">bsaP</name>
    <name type="ordered locus">ML1221</name>
    <name type="ORF">B1170_C1_162</name>
</gene>
<name>BSAP_MYCLE</name>
<protein>
    <recommendedName>
        <fullName evidence="1">Biotin synthase auxiliary protein</fullName>
    </recommendedName>
</protein>